<organism>
    <name type="scientific">Arabidopsis thaliana</name>
    <name type="common">Mouse-ear cress</name>
    <dbReference type="NCBI Taxonomy" id="3702"/>
    <lineage>
        <taxon>Eukaryota</taxon>
        <taxon>Viridiplantae</taxon>
        <taxon>Streptophyta</taxon>
        <taxon>Embryophyta</taxon>
        <taxon>Tracheophyta</taxon>
        <taxon>Spermatophyta</taxon>
        <taxon>Magnoliopsida</taxon>
        <taxon>eudicotyledons</taxon>
        <taxon>Gunneridae</taxon>
        <taxon>Pentapetalae</taxon>
        <taxon>rosids</taxon>
        <taxon>malvids</taxon>
        <taxon>Brassicales</taxon>
        <taxon>Brassicaceae</taxon>
        <taxon>Camelineae</taxon>
        <taxon>Arabidopsis</taxon>
    </lineage>
</organism>
<keyword id="KW-0067">ATP-binding</keyword>
<keyword id="KW-0173">Coenzyme A biosynthesis</keyword>
<keyword id="KW-0418">Kinase</keyword>
<keyword id="KW-0547">Nucleotide-binding</keyword>
<keyword id="KW-0576">Peroxisome</keyword>
<keyword id="KW-1185">Reference proteome</keyword>
<keyword id="KW-0808">Transferase</keyword>
<protein>
    <recommendedName>
        <fullName evidence="4">Dephospho-CoA kinase</fullName>
        <ecNumber evidence="2">2.7.1.24</ecNumber>
    </recommendedName>
    <alternativeName>
        <fullName evidence="4">AtCoaE</fullName>
    </alternativeName>
    <alternativeName>
        <fullName evidence="4">Dephosphocoenzyme A kinase</fullName>
    </alternativeName>
</protein>
<feature type="chain" id="PRO_0000429413" description="Dephospho-CoA kinase">
    <location>
        <begin position="1"/>
        <end position="232"/>
    </location>
</feature>
<feature type="domain" description="DPCK" evidence="1">
    <location>
        <begin position="3"/>
        <end position="206"/>
    </location>
</feature>
<feature type="binding site" evidence="1">
    <location>
        <begin position="8"/>
        <end position="15"/>
    </location>
    <ligand>
        <name>ATP</name>
        <dbReference type="ChEBI" id="CHEBI:30616"/>
    </ligand>
</feature>
<reference key="1">
    <citation type="journal article" date="1999" name="Nature">
        <title>Sequence and analysis of chromosome 2 of the plant Arabidopsis thaliana.</title>
        <authorList>
            <person name="Lin X."/>
            <person name="Kaul S."/>
            <person name="Rounsley S.D."/>
            <person name="Shea T.P."/>
            <person name="Benito M.-I."/>
            <person name="Town C.D."/>
            <person name="Fujii C.Y."/>
            <person name="Mason T.M."/>
            <person name="Bowman C.L."/>
            <person name="Barnstead M.E."/>
            <person name="Feldblyum T.V."/>
            <person name="Buell C.R."/>
            <person name="Ketchum K.A."/>
            <person name="Lee J.J."/>
            <person name="Ronning C.M."/>
            <person name="Koo H.L."/>
            <person name="Moffat K.S."/>
            <person name="Cronin L.A."/>
            <person name="Shen M."/>
            <person name="Pai G."/>
            <person name="Van Aken S."/>
            <person name="Umayam L."/>
            <person name="Tallon L.J."/>
            <person name="Gill J.E."/>
            <person name="Adams M.D."/>
            <person name="Carrera A.J."/>
            <person name="Creasy T.H."/>
            <person name="Goodman H.M."/>
            <person name="Somerville C.R."/>
            <person name="Copenhaver G.P."/>
            <person name="Preuss D."/>
            <person name="Nierman W.C."/>
            <person name="White O."/>
            <person name="Eisen J.A."/>
            <person name="Salzberg S.L."/>
            <person name="Fraser C.M."/>
            <person name="Venter J.C."/>
        </authorList>
    </citation>
    <scope>NUCLEOTIDE SEQUENCE [LARGE SCALE GENOMIC DNA]</scope>
    <source>
        <strain>cv. Columbia</strain>
    </source>
</reference>
<reference key="2">
    <citation type="journal article" date="2017" name="Plant J.">
        <title>Araport11: a complete reannotation of the Arabidopsis thaliana reference genome.</title>
        <authorList>
            <person name="Cheng C.Y."/>
            <person name="Krishnakumar V."/>
            <person name="Chan A.P."/>
            <person name="Thibaud-Nissen F."/>
            <person name="Schobel S."/>
            <person name="Town C.D."/>
        </authorList>
    </citation>
    <scope>GENOME REANNOTATION</scope>
    <source>
        <strain>cv. Columbia</strain>
    </source>
</reference>
<reference key="3">
    <citation type="submission" date="2006-07" db="EMBL/GenBank/DDBJ databases">
        <title>Large-scale analysis of RIKEN Arabidopsis full-length (RAFL) cDNAs.</title>
        <authorList>
            <person name="Totoki Y."/>
            <person name="Seki M."/>
            <person name="Ishida J."/>
            <person name="Nakajima M."/>
            <person name="Enju A."/>
            <person name="Kamiya A."/>
            <person name="Narusaka M."/>
            <person name="Shin-i T."/>
            <person name="Nakagawa M."/>
            <person name="Sakamoto N."/>
            <person name="Oishi K."/>
            <person name="Kohara Y."/>
            <person name="Kobayashi M."/>
            <person name="Toyoda A."/>
            <person name="Sakaki Y."/>
            <person name="Sakurai T."/>
            <person name="Iida K."/>
            <person name="Akiyama K."/>
            <person name="Satou M."/>
            <person name="Toyoda T."/>
            <person name="Konagaya A."/>
            <person name="Carninci P."/>
            <person name="Kawai J."/>
            <person name="Hayashizaki Y."/>
            <person name="Shinozaki K."/>
        </authorList>
    </citation>
    <scope>NUCLEOTIDE SEQUENCE [LARGE SCALE MRNA]</scope>
    <source>
        <strain>cv. Columbia</strain>
    </source>
</reference>
<reference key="4">
    <citation type="submission" date="2006-11" db="EMBL/GenBank/DDBJ databases">
        <title>Arabidopsis ORF clones.</title>
        <authorList>
            <person name="Bautista V.R."/>
            <person name="Kim C.J."/>
            <person name="Chen H."/>
            <person name="Quinitio C."/>
            <person name="Ecker J.R."/>
        </authorList>
    </citation>
    <scope>NUCLEOTIDE SEQUENCE [LARGE SCALE MRNA]</scope>
    <source>
        <strain>cv. Columbia</strain>
    </source>
</reference>
<reference key="5">
    <citation type="journal article" date="2003" name="J. Biol. Chem.">
        <title>4'-phosphopantetheine and coenzyme A biosynthesis in plants.</title>
        <authorList>
            <person name="Kupke T."/>
            <person name="Hernandez-Acosta P."/>
            <person name="Culianez-Macia F.A."/>
        </authorList>
    </citation>
    <scope>FUNCTION</scope>
    <scope>CATALYTIC ACTIVITY</scope>
</reference>
<reference key="6">
    <citation type="journal article" date="2009" name="Plant Physiol.">
        <title>In-depth proteome analysis of Arabidopsis leaf peroxisomes combined with in vivo subcellular targeting verification indicates novel metabolic and regulatory functions of peroxisomes.</title>
        <authorList>
            <person name="Reumann S."/>
            <person name="Quan S."/>
            <person name="Aung K."/>
            <person name="Yang P."/>
            <person name="Manandhar-Shrestha K."/>
            <person name="Holbrook D."/>
            <person name="Linka N."/>
            <person name="Switzenberg R."/>
            <person name="Wilkerson C.G."/>
            <person name="Weber A.P."/>
            <person name="Olsen L.J."/>
            <person name="Hu J."/>
        </authorList>
    </citation>
    <scope>SUBCELLULAR LOCATION</scope>
</reference>
<gene>
    <name evidence="4" type="primary">COAE</name>
    <name evidence="6" type="ordered locus">At2g27490</name>
    <name evidence="7" type="ORF">F10A12.17</name>
</gene>
<accession>Q9ZQH0</accession>
<proteinExistence type="evidence at protein level"/>
<evidence type="ECO:0000255" key="1">
    <source>
        <dbReference type="PROSITE-ProRule" id="PRU00564"/>
    </source>
</evidence>
<evidence type="ECO:0000269" key="2">
    <source>
    </source>
</evidence>
<evidence type="ECO:0000269" key="3">
    <source>
    </source>
</evidence>
<evidence type="ECO:0000303" key="4">
    <source>
    </source>
</evidence>
<evidence type="ECO:0000305" key="5"/>
<evidence type="ECO:0000312" key="6">
    <source>
        <dbReference type="Araport" id="AT2G27490"/>
    </source>
</evidence>
<evidence type="ECO:0000312" key="7">
    <source>
        <dbReference type="EMBL" id="AAD15601.1"/>
    </source>
</evidence>
<name>COAE_ARATH</name>
<sequence>MRIVGLTGGIASGKSTVSNLFKASGIPVVDADVVARDVLKKGSGGWKRVVAAFGEEILLPSGEVDRPKLGQIVFSSDSKRQLLNKLMAPYISSGIFWEILKQWASGAKVIVVDIPLLFEVKMDKWTKPIVVVWVSQETQLKRLMERDGLSEEDARNRVMAQMPLDSKRSKADVVIDNNGSLDDLHQQFEKVLIEIRRPLTWIEFWRSRQGAFSVLGSVILGLSVCKQLKIGS</sequence>
<dbReference type="EC" id="2.7.1.24" evidence="2"/>
<dbReference type="EMBL" id="AC006232">
    <property type="protein sequence ID" value="AAD15601.1"/>
    <property type="molecule type" value="Genomic_DNA"/>
</dbReference>
<dbReference type="EMBL" id="CP002685">
    <property type="protein sequence ID" value="AEC08002.1"/>
    <property type="molecule type" value="Genomic_DNA"/>
</dbReference>
<dbReference type="EMBL" id="CP002685">
    <property type="protein sequence ID" value="AEC08003.1"/>
    <property type="molecule type" value="Genomic_DNA"/>
</dbReference>
<dbReference type="EMBL" id="CP002685">
    <property type="protein sequence ID" value="ANM61884.1"/>
    <property type="molecule type" value="Genomic_DNA"/>
</dbReference>
<dbReference type="EMBL" id="CP002685">
    <property type="protein sequence ID" value="ANM61885.1"/>
    <property type="molecule type" value="Genomic_DNA"/>
</dbReference>
<dbReference type="EMBL" id="AK228668">
    <property type="protein sequence ID" value="BAF00575.1"/>
    <property type="molecule type" value="mRNA"/>
</dbReference>
<dbReference type="EMBL" id="BT029373">
    <property type="protein sequence ID" value="ABK32187.1"/>
    <property type="molecule type" value="mRNA"/>
</dbReference>
<dbReference type="PIR" id="E84673">
    <property type="entry name" value="E84673"/>
</dbReference>
<dbReference type="RefSeq" id="NP_001324075.1">
    <property type="nucleotide sequence ID" value="NM_001336118.1"/>
</dbReference>
<dbReference type="RefSeq" id="NP_001324076.1">
    <property type="nucleotide sequence ID" value="NM_001336119.1"/>
</dbReference>
<dbReference type="RefSeq" id="NP_180318.1">
    <property type="nucleotide sequence ID" value="NM_128309.4"/>
</dbReference>
<dbReference type="RefSeq" id="NP_850102.1">
    <property type="nucleotide sequence ID" value="NM_179771.3"/>
</dbReference>
<dbReference type="SMR" id="Q9ZQH0"/>
<dbReference type="FunCoup" id="Q9ZQH0">
    <property type="interactions" value="2894"/>
</dbReference>
<dbReference type="STRING" id="3702.Q9ZQH0"/>
<dbReference type="PaxDb" id="3702-AT2G27490.2"/>
<dbReference type="ProteomicsDB" id="241249"/>
<dbReference type="DNASU" id="817294"/>
<dbReference type="EnsemblPlants" id="AT2G27490.1">
    <property type="protein sequence ID" value="AT2G27490.1"/>
    <property type="gene ID" value="AT2G27490"/>
</dbReference>
<dbReference type="EnsemblPlants" id="AT2G27490.2">
    <property type="protein sequence ID" value="AT2G27490.2"/>
    <property type="gene ID" value="AT2G27490"/>
</dbReference>
<dbReference type="EnsemblPlants" id="AT2G27490.3">
    <property type="protein sequence ID" value="AT2G27490.3"/>
    <property type="gene ID" value="AT2G27490"/>
</dbReference>
<dbReference type="EnsemblPlants" id="AT2G27490.4">
    <property type="protein sequence ID" value="AT2G27490.4"/>
    <property type="gene ID" value="AT2G27490"/>
</dbReference>
<dbReference type="GeneID" id="817294"/>
<dbReference type="Gramene" id="AT2G27490.1">
    <property type="protein sequence ID" value="AT2G27490.1"/>
    <property type="gene ID" value="AT2G27490"/>
</dbReference>
<dbReference type="Gramene" id="AT2G27490.2">
    <property type="protein sequence ID" value="AT2G27490.2"/>
    <property type="gene ID" value="AT2G27490"/>
</dbReference>
<dbReference type="Gramene" id="AT2G27490.3">
    <property type="protein sequence ID" value="AT2G27490.3"/>
    <property type="gene ID" value="AT2G27490"/>
</dbReference>
<dbReference type="Gramene" id="AT2G27490.4">
    <property type="protein sequence ID" value="AT2G27490.4"/>
    <property type="gene ID" value="AT2G27490"/>
</dbReference>
<dbReference type="KEGG" id="ath:AT2G27490"/>
<dbReference type="Araport" id="AT2G27490"/>
<dbReference type="TAIR" id="AT2G27490">
    <property type="gene designation" value="ATCOAE"/>
</dbReference>
<dbReference type="eggNOG" id="KOG3220">
    <property type="taxonomic scope" value="Eukaryota"/>
</dbReference>
<dbReference type="HOGENOM" id="CLU_057180_0_0_1"/>
<dbReference type="InParanoid" id="Q9ZQH0"/>
<dbReference type="OMA" id="CQMDIEQ"/>
<dbReference type="PhylomeDB" id="Q9ZQH0"/>
<dbReference type="UniPathway" id="UPA00241">
    <property type="reaction ID" value="UER00356"/>
</dbReference>
<dbReference type="PRO" id="PR:Q9ZQH0"/>
<dbReference type="Proteomes" id="UP000006548">
    <property type="component" value="Chromosome 2"/>
</dbReference>
<dbReference type="ExpressionAtlas" id="Q9ZQH0">
    <property type="expression patterns" value="baseline and differential"/>
</dbReference>
<dbReference type="GO" id="GO:0009507">
    <property type="term" value="C:chloroplast"/>
    <property type="evidence" value="ECO:0007005"/>
    <property type="project" value="TAIR"/>
</dbReference>
<dbReference type="GO" id="GO:0005777">
    <property type="term" value="C:peroxisome"/>
    <property type="evidence" value="ECO:0000314"/>
    <property type="project" value="TAIR"/>
</dbReference>
<dbReference type="GO" id="GO:0005773">
    <property type="term" value="C:vacuole"/>
    <property type="evidence" value="ECO:0007005"/>
    <property type="project" value="TAIR"/>
</dbReference>
<dbReference type="GO" id="GO:0005524">
    <property type="term" value="F:ATP binding"/>
    <property type="evidence" value="ECO:0007669"/>
    <property type="project" value="UniProtKB-KW"/>
</dbReference>
<dbReference type="GO" id="GO:0004140">
    <property type="term" value="F:dephospho-CoA kinase activity"/>
    <property type="evidence" value="ECO:0000314"/>
    <property type="project" value="TAIR"/>
</dbReference>
<dbReference type="GO" id="GO:0015937">
    <property type="term" value="P:coenzyme A biosynthetic process"/>
    <property type="evidence" value="ECO:0000314"/>
    <property type="project" value="TAIR"/>
</dbReference>
<dbReference type="CDD" id="cd02022">
    <property type="entry name" value="DPCK"/>
    <property type="match status" value="1"/>
</dbReference>
<dbReference type="FunFam" id="3.40.50.300:FF:000485">
    <property type="entry name" value="Dephospho-CoA kinase CAB5"/>
    <property type="match status" value="1"/>
</dbReference>
<dbReference type="Gene3D" id="3.40.50.300">
    <property type="entry name" value="P-loop containing nucleotide triphosphate hydrolases"/>
    <property type="match status" value="1"/>
</dbReference>
<dbReference type="HAMAP" id="MF_00376">
    <property type="entry name" value="Dephospho_CoA_kinase"/>
    <property type="match status" value="1"/>
</dbReference>
<dbReference type="InterPro" id="IPR001977">
    <property type="entry name" value="Depp_CoAkinase"/>
</dbReference>
<dbReference type="InterPro" id="IPR027417">
    <property type="entry name" value="P-loop_NTPase"/>
</dbReference>
<dbReference type="NCBIfam" id="TIGR00152">
    <property type="entry name" value="dephospho-CoA kinase"/>
    <property type="match status" value="1"/>
</dbReference>
<dbReference type="PANTHER" id="PTHR10695:SF46">
    <property type="entry name" value="BIFUNCTIONAL COENZYME A SYNTHASE-RELATED"/>
    <property type="match status" value="1"/>
</dbReference>
<dbReference type="PANTHER" id="PTHR10695">
    <property type="entry name" value="DEPHOSPHO-COA KINASE-RELATED"/>
    <property type="match status" value="1"/>
</dbReference>
<dbReference type="Pfam" id="PF01121">
    <property type="entry name" value="CoaE"/>
    <property type="match status" value="1"/>
</dbReference>
<dbReference type="SUPFAM" id="SSF52540">
    <property type="entry name" value="P-loop containing nucleoside triphosphate hydrolases"/>
    <property type="match status" value="1"/>
</dbReference>
<dbReference type="PROSITE" id="PS51219">
    <property type="entry name" value="DPCK"/>
    <property type="match status" value="1"/>
</dbReference>
<comment type="function">
    <text evidence="2">Catalyzes the phosphorylation of the 3'-hydroxyl group of dephosphocoenzyme A to form coenzyme A.</text>
</comment>
<comment type="catalytic activity">
    <reaction evidence="2">
        <text>3'-dephospho-CoA + ATP = ADP + CoA + H(+)</text>
        <dbReference type="Rhea" id="RHEA:18245"/>
        <dbReference type="ChEBI" id="CHEBI:15378"/>
        <dbReference type="ChEBI" id="CHEBI:30616"/>
        <dbReference type="ChEBI" id="CHEBI:57287"/>
        <dbReference type="ChEBI" id="CHEBI:57328"/>
        <dbReference type="ChEBI" id="CHEBI:456216"/>
        <dbReference type="EC" id="2.7.1.24"/>
    </reaction>
    <physiologicalReaction direction="left-to-right" evidence="2">
        <dbReference type="Rhea" id="RHEA:18246"/>
    </physiologicalReaction>
</comment>
<comment type="pathway">
    <text evidence="5">Cofactor biosynthesis; coenzyme A biosynthesis; CoA from (R)-pantothenate: step 5/5.</text>
</comment>
<comment type="subcellular location">
    <subcellularLocation>
        <location evidence="3">Peroxisome</location>
    </subcellularLocation>
</comment>
<comment type="similarity">
    <text evidence="5">Belongs to the CoaE family.</text>
</comment>